<proteinExistence type="inferred from homology"/>
<gene>
    <name evidence="1" type="primary">rlmN</name>
    <name type="ordered locus">CJJ81176_0007</name>
</gene>
<accession>A1W1W6</accession>
<dbReference type="EC" id="2.1.1.192" evidence="1"/>
<dbReference type="EMBL" id="CP000538">
    <property type="protein sequence ID" value="EAQ72023.1"/>
    <property type="molecule type" value="Genomic_DNA"/>
</dbReference>
<dbReference type="RefSeq" id="WP_002869297.1">
    <property type="nucleotide sequence ID" value="NC_008787.1"/>
</dbReference>
<dbReference type="SMR" id="A1W1W6"/>
<dbReference type="KEGG" id="cjj:CJJ81176_0007"/>
<dbReference type="eggNOG" id="COG0820">
    <property type="taxonomic scope" value="Bacteria"/>
</dbReference>
<dbReference type="HOGENOM" id="CLU_029101_2_0_7"/>
<dbReference type="Proteomes" id="UP000000646">
    <property type="component" value="Chromosome"/>
</dbReference>
<dbReference type="GO" id="GO:0005737">
    <property type="term" value="C:cytoplasm"/>
    <property type="evidence" value="ECO:0007669"/>
    <property type="project" value="UniProtKB-SubCell"/>
</dbReference>
<dbReference type="GO" id="GO:0051539">
    <property type="term" value="F:4 iron, 4 sulfur cluster binding"/>
    <property type="evidence" value="ECO:0007669"/>
    <property type="project" value="UniProtKB-UniRule"/>
</dbReference>
<dbReference type="GO" id="GO:0046872">
    <property type="term" value="F:metal ion binding"/>
    <property type="evidence" value="ECO:0007669"/>
    <property type="project" value="UniProtKB-KW"/>
</dbReference>
<dbReference type="GO" id="GO:0070040">
    <property type="term" value="F:rRNA (adenine(2503)-C2-)-methyltransferase activity"/>
    <property type="evidence" value="ECO:0007669"/>
    <property type="project" value="UniProtKB-UniRule"/>
</dbReference>
<dbReference type="GO" id="GO:0019843">
    <property type="term" value="F:rRNA binding"/>
    <property type="evidence" value="ECO:0007669"/>
    <property type="project" value="UniProtKB-UniRule"/>
</dbReference>
<dbReference type="GO" id="GO:0002935">
    <property type="term" value="F:tRNA (adenine(37)-C2)-methyltransferase activity"/>
    <property type="evidence" value="ECO:0007669"/>
    <property type="project" value="UniProtKB-UniRule"/>
</dbReference>
<dbReference type="GO" id="GO:0000049">
    <property type="term" value="F:tRNA binding"/>
    <property type="evidence" value="ECO:0007669"/>
    <property type="project" value="UniProtKB-UniRule"/>
</dbReference>
<dbReference type="GO" id="GO:0070475">
    <property type="term" value="P:rRNA base methylation"/>
    <property type="evidence" value="ECO:0007669"/>
    <property type="project" value="UniProtKB-UniRule"/>
</dbReference>
<dbReference type="GO" id="GO:0030488">
    <property type="term" value="P:tRNA methylation"/>
    <property type="evidence" value="ECO:0007669"/>
    <property type="project" value="UniProtKB-UniRule"/>
</dbReference>
<dbReference type="CDD" id="cd01335">
    <property type="entry name" value="Radical_SAM"/>
    <property type="match status" value="1"/>
</dbReference>
<dbReference type="FunFam" id="3.20.20.70:FF:000014">
    <property type="entry name" value="Probable dual-specificity RNA methyltransferase RlmN"/>
    <property type="match status" value="1"/>
</dbReference>
<dbReference type="Gene3D" id="1.10.150.530">
    <property type="match status" value="1"/>
</dbReference>
<dbReference type="Gene3D" id="3.20.20.70">
    <property type="entry name" value="Aldolase class I"/>
    <property type="match status" value="1"/>
</dbReference>
<dbReference type="HAMAP" id="MF_01849">
    <property type="entry name" value="RNA_methyltr_RlmN"/>
    <property type="match status" value="1"/>
</dbReference>
<dbReference type="InterPro" id="IPR013785">
    <property type="entry name" value="Aldolase_TIM"/>
</dbReference>
<dbReference type="InterPro" id="IPR006638">
    <property type="entry name" value="Elp3/MiaA/NifB-like_rSAM"/>
</dbReference>
<dbReference type="InterPro" id="IPR040072">
    <property type="entry name" value="Methyltransferase_A"/>
</dbReference>
<dbReference type="InterPro" id="IPR048641">
    <property type="entry name" value="RlmN_N"/>
</dbReference>
<dbReference type="InterPro" id="IPR027492">
    <property type="entry name" value="RNA_MTrfase_RlmN"/>
</dbReference>
<dbReference type="InterPro" id="IPR004383">
    <property type="entry name" value="rRNA_lsu_MTrfase_RlmN/Cfr"/>
</dbReference>
<dbReference type="InterPro" id="IPR007197">
    <property type="entry name" value="rSAM"/>
</dbReference>
<dbReference type="NCBIfam" id="TIGR00048">
    <property type="entry name" value="rRNA_mod_RlmN"/>
    <property type="match status" value="1"/>
</dbReference>
<dbReference type="PANTHER" id="PTHR30544">
    <property type="entry name" value="23S RRNA METHYLTRANSFERASE"/>
    <property type="match status" value="1"/>
</dbReference>
<dbReference type="PANTHER" id="PTHR30544:SF5">
    <property type="entry name" value="RADICAL SAM CORE DOMAIN-CONTAINING PROTEIN"/>
    <property type="match status" value="1"/>
</dbReference>
<dbReference type="Pfam" id="PF04055">
    <property type="entry name" value="Radical_SAM"/>
    <property type="match status" value="1"/>
</dbReference>
<dbReference type="Pfam" id="PF21016">
    <property type="entry name" value="RlmN_N"/>
    <property type="match status" value="1"/>
</dbReference>
<dbReference type="PIRSF" id="PIRSF006004">
    <property type="entry name" value="CHP00048"/>
    <property type="match status" value="1"/>
</dbReference>
<dbReference type="SFLD" id="SFLDF00275">
    <property type="entry name" value="adenosine_C2_methyltransferase"/>
    <property type="match status" value="1"/>
</dbReference>
<dbReference type="SFLD" id="SFLDG01062">
    <property type="entry name" value="methyltransferase_(Class_A)"/>
    <property type="match status" value="1"/>
</dbReference>
<dbReference type="SMART" id="SM00729">
    <property type="entry name" value="Elp3"/>
    <property type="match status" value="1"/>
</dbReference>
<dbReference type="SUPFAM" id="SSF102114">
    <property type="entry name" value="Radical SAM enzymes"/>
    <property type="match status" value="1"/>
</dbReference>
<dbReference type="PROSITE" id="PS51918">
    <property type="entry name" value="RADICAL_SAM"/>
    <property type="match status" value="1"/>
</dbReference>
<protein>
    <recommendedName>
        <fullName evidence="1">Dual-specificity RNA methyltransferase RlmN</fullName>
        <ecNumber evidence="1">2.1.1.192</ecNumber>
    </recommendedName>
    <alternativeName>
        <fullName evidence="1">23S rRNA (adenine(2503)-C(2))-methyltransferase</fullName>
    </alternativeName>
    <alternativeName>
        <fullName evidence="1">23S rRNA m2A2503 methyltransferase</fullName>
    </alternativeName>
    <alternativeName>
        <fullName evidence="1">Ribosomal RNA large subunit methyltransferase N</fullName>
    </alternativeName>
    <alternativeName>
        <fullName evidence="1">tRNA (adenine(37)-C(2))-methyltransferase</fullName>
    </alternativeName>
    <alternativeName>
        <fullName evidence="1">tRNA m2A37 methyltransferase</fullName>
    </alternativeName>
</protein>
<sequence>MKELVNILDFLPEELGEKIKPMFRVKQIYQWIYQKYANNFSDMSSLPKDLRLELAQNFHFSPVKCVKNEQSKDGSIKYLFELIDGLRVESVLLPMKKEKINTEGKRISHARYTICVSSQVGCKSGCSFCLTAKGGLKRNLSTGEIVGQILWIKKQNNIPYERRVNIVYMGMGEPLDNLKNVSKAVKILAQNDGLAISPRRQTISTSGLAKQIKELGQMNLGVLLAISLHAVNDELRTELMPINKAYNIAAIMDAVREFPIDQRKRVMFEYLLIDGINDKLEHAKELVKLLNGIKAKVNLILFNPHEGSLYKRPSLENAIKFQDLLSNKGVTCTIRESKGLDISAACGQLKERAKEQ</sequence>
<reference key="1">
    <citation type="submission" date="2006-12" db="EMBL/GenBank/DDBJ databases">
        <authorList>
            <person name="Fouts D.E."/>
            <person name="Nelson K.E."/>
            <person name="Sebastian Y."/>
        </authorList>
    </citation>
    <scope>NUCLEOTIDE SEQUENCE [LARGE SCALE GENOMIC DNA]</scope>
    <source>
        <strain>81-176</strain>
    </source>
</reference>
<feature type="chain" id="PRO_0000350097" description="Dual-specificity RNA methyltransferase RlmN">
    <location>
        <begin position="1"/>
        <end position="356"/>
    </location>
</feature>
<feature type="domain" description="Radical SAM core" evidence="2">
    <location>
        <begin position="108"/>
        <end position="341"/>
    </location>
</feature>
<feature type="active site" description="Proton acceptor" evidence="1">
    <location>
        <position position="89"/>
    </location>
</feature>
<feature type="active site" description="S-methylcysteine intermediate" evidence="1">
    <location>
        <position position="346"/>
    </location>
</feature>
<feature type="binding site" evidence="1">
    <location>
        <position position="122"/>
    </location>
    <ligand>
        <name>[4Fe-4S] cluster</name>
        <dbReference type="ChEBI" id="CHEBI:49883"/>
        <note>4Fe-4S-S-AdoMet</note>
    </ligand>
</feature>
<feature type="binding site" evidence="1">
    <location>
        <position position="126"/>
    </location>
    <ligand>
        <name>[4Fe-4S] cluster</name>
        <dbReference type="ChEBI" id="CHEBI:49883"/>
        <note>4Fe-4S-S-AdoMet</note>
    </ligand>
</feature>
<feature type="binding site" evidence="1">
    <location>
        <position position="129"/>
    </location>
    <ligand>
        <name>[4Fe-4S] cluster</name>
        <dbReference type="ChEBI" id="CHEBI:49883"/>
        <note>4Fe-4S-S-AdoMet</note>
    </ligand>
</feature>
<feature type="binding site" evidence="1">
    <location>
        <begin position="172"/>
        <end position="173"/>
    </location>
    <ligand>
        <name>S-adenosyl-L-methionine</name>
        <dbReference type="ChEBI" id="CHEBI:59789"/>
    </ligand>
</feature>
<feature type="binding site" evidence="1">
    <location>
        <position position="204"/>
    </location>
    <ligand>
        <name>S-adenosyl-L-methionine</name>
        <dbReference type="ChEBI" id="CHEBI:59789"/>
    </ligand>
</feature>
<feature type="binding site" evidence="1">
    <location>
        <begin position="227"/>
        <end position="229"/>
    </location>
    <ligand>
        <name>S-adenosyl-L-methionine</name>
        <dbReference type="ChEBI" id="CHEBI:59789"/>
    </ligand>
</feature>
<feature type="binding site" evidence="1">
    <location>
        <position position="303"/>
    </location>
    <ligand>
        <name>S-adenosyl-L-methionine</name>
        <dbReference type="ChEBI" id="CHEBI:59789"/>
    </ligand>
</feature>
<feature type="disulfide bond" description="(transient)" evidence="1">
    <location>
        <begin position="115"/>
        <end position="346"/>
    </location>
</feature>
<organism>
    <name type="scientific">Campylobacter jejuni subsp. jejuni serotype O:23/36 (strain 81-176)</name>
    <dbReference type="NCBI Taxonomy" id="354242"/>
    <lineage>
        <taxon>Bacteria</taxon>
        <taxon>Pseudomonadati</taxon>
        <taxon>Campylobacterota</taxon>
        <taxon>Epsilonproteobacteria</taxon>
        <taxon>Campylobacterales</taxon>
        <taxon>Campylobacteraceae</taxon>
        <taxon>Campylobacter</taxon>
    </lineage>
</organism>
<keyword id="KW-0004">4Fe-4S</keyword>
<keyword id="KW-0963">Cytoplasm</keyword>
<keyword id="KW-1015">Disulfide bond</keyword>
<keyword id="KW-0408">Iron</keyword>
<keyword id="KW-0411">Iron-sulfur</keyword>
<keyword id="KW-0479">Metal-binding</keyword>
<keyword id="KW-0489">Methyltransferase</keyword>
<keyword id="KW-0698">rRNA processing</keyword>
<keyword id="KW-0949">S-adenosyl-L-methionine</keyword>
<keyword id="KW-0808">Transferase</keyword>
<keyword id="KW-0819">tRNA processing</keyword>
<name>RLMN_CAMJJ</name>
<comment type="function">
    <text evidence="1">Specifically methylates position 2 of adenine 2503 in 23S rRNA and position 2 of adenine 37 in tRNAs. m2A2503 modification seems to play a crucial role in the proofreading step occurring at the peptidyl transferase center and thus would serve to optimize ribosomal fidelity.</text>
</comment>
<comment type="catalytic activity">
    <reaction evidence="1">
        <text>adenosine(2503) in 23S rRNA + 2 reduced [2Fe-2S]-[ferredoxin] + 2 S-adenosyl-L-methionine = 2-methyladenosine(2503) in 23S rRNA + 5'-deoxyadenosine + L-methionine + 2 oxidized [2Fe-2S]-[ferredoxin] + S-adenosyl-L-homocysteine</text>
        <dbReference type="Rhea" id="RHEA:42916"/>
        <dbReference type="Rhea" id="RHEA-COMP:10000"/>
        <dbReference type="Rhea" id="RHEA-COMP:10001"/>
        <dbReference type="Rhea" id="RHEA-COMP:10152"/>
        <dbReference type="Rhea" id="RHEA-COMP:10282"/>
        <dbReference type="ChEBI" id="CHEBI:17319"/>
        <dbReference type="ChEBI" id="CHEBI:33737"/>
        <dbReference type="ChEBI" id="CHEBI:33738"/>
        <dbReference type="ChEBI" id="CHEBI:57844"/>
        <dbReference type="ChEBI" id="CHEBI:57856"/>
        <dbReference type="ChEBI" id="CHEBI:59789"/>
        <dbReference type="ChEBI" id="CHEBI:74411"/>
        <dbReference type="ChEBI" id="CHEBI:74497"/>
        <dbReference type="EC" id="2.1.1.192"/>
    </reaction>
</comment>
<comment type="catalytic activity">
    <reaction evidence="1">
        <text>adenosine(37) in tRNA + 2 reduced [2Fe-2S]-[ferredoxin] + 2 S-adenosyl-L-methionine = 2-methyladenosine(37) in tRNA + 5'-deoxyadenosine + L-methionine + 2 oxidized [2Fe-2S]-[ferredoxin] + S-adenosyl-L-homocysteine</text>
        <dbReference type="Rhea" id="RHEA:43332"/>
        <dbReference type="Rhea" id="RHEA-COMP:10000"/>
        <dbReference type="Rhea" id="RHEA-COMP:10001"/>
        <dbReference type="Rhea" id="RHEA-COMP:10162"/>
        <dbReference type="Rhea" id="RHEA-COMP:10485"/>
        <dbReference type="ChEBI" id="CHEBI:17319"/>
        <dbReference type="ChEBI" id="CHEBI:33737"/>
        <dbReference type="ChEBI" id="CHEBI:33738"/>
        <dbReference type="ChEBI" id="CHEBI:57844"/>
        <dbReference type="ChEBI" id="CHEBI:57856"/>
        <dbReference type="ChEBI" id="CHEBI:59789"/>
        <dbReference type="ChEBI" id="CHEBI:74411"/>
        <dbReference type="ChEBI" id="CHEBI:74497"/>
        <dbReference type="EC" id="2.1.1.192"/>
    </reaction>
</comment>
<comment type="cofactor">
    <cofactor evidence="1">
        <name>[4Fe-4S] cluster</name>
        <dbReference type="ChEBI" id="CHEBI:49883"/>
    </cofactor>
    <text evidence="1">Binds 1 [4Fe-4S] cluster. The cluster is coordinated with 3 cysteines and an exchangeable S-adenosyl-L-methionine.</text>
</comment>
<comment type="subcellular location">
    <subcellularLocation>
        <location evidence="1">Cytoplasm</location>
    </subcellularLocation>
</comment>
<comment type="miscellaneous">
    <text evidence="1">Reaction proceeds by a ping-pong mechanism involving intermediate methylation of a conserved cysteine residue.</text>
</comment>
<comment type="similarity">
    <text evidence="1">Belongs to the radical SAM superfamily. RlmN family.</text>
</comment>
<evidence type="ECO:0000255" key="1">
    <source>
        <dbReference type="HAMAP-Rule" id="MF_01849"/>
    </source>
</evidence>
<evidence type="ECO:0000255" key="2">
    <source>
        <dbReference type="PROSITE-ProRule" id="PRU01266"/>
    </source>
</evidence>